<evidence type="ECO:0000250" key="1"/>
<evidence type="ECO:0000255" key="2"/>
<evidence type="ECO:0000255" key="3">
    <source>
        <dbReference type="PROSITE-ProRule" id="PRU00107"/>
    </source>
</evidence>
<evidence type="ECO:0000255" key="4">
    <source>
        <dbReference type="PROSITE-ProRule" id="PRU00169"/>
    </source>
</evidence>
<evidence type="ECO:0000256" key="5">
    <source>
        <dbReference type="SAM" id="MobiDB-lite"/>
    </source>
</evidence>
<evidence type="ECO:0000269" key="6">
    <source>
    </source>
</evidence>
<evidence type="ECO:0000269" key="7">
    <source>
    </source>
</evidence>
<evidence type="ECO:0000269" key="8">
    <source>
    </source>
</evidence>
<evidence type="ECO:0000269" key="9">
    <source>
    </source>
</evidence>
<evidence type="ECO:0000269" key="10">
    <source>
    </source>
</evidence>
<evidence type="ECO:0000269" key="11">
    <source>
    </source>
</evidence>
<evidence type="ECO:0000305" key="12"/>
<evidence type="ECO:0007744" key="13">
    <source>
    </source>
</evidence>
<evidence type="ECO:0007744" key="14">
    <source>
    </source>
</evidence>
<evidence type="ECO:0007744" key="15">
    <source>
    </source>
</evidence>
<evidence type="ECO:0007829" key="16">
    <source>
        <dbReference type="PDB" id="2R25"/>
    </source>
</evidence>
<organism>
    <name type="scientific">Saccharomyces cerevisiae (strain ATCC 204508 / S288c)</name>
    <name type="common">Baker's yeast</name>
    <dbReference type="NCBI Taxonomy" id="559292"/>
    <lineage>
        <taxon>Eukaryota</taxon>
        <taxon>Fungi</taxon>
        <taxon>Dikarya</taxon>
        <taxon>Ascomycota</taxon>
        <taxon>Saccharomycotina</taxon>
        <taxon>Saccharomycetes</taxon>
        <taxon>Saccharomycetales</taxon>
        <taxon>Saccharomycetaceae</taxon>
        <taxon>Saccharomyces</taxon>
    </lineage>
</organism>
<comment type="function">
    <text evidence="10 11">Histidine kinase that acts as an osmosensor at the plasma membrane. Part of the bifurcated SLN1-YPD1-SKN7/SSK1 two-component regulatory system, which controls activity of the HOG1 pathway and gene expression in response to changes in the osmolarity of the extracellular environment. Under normal osmotic conditions, the histidine kinase autophosphorylates His-576. This phosphate is subsequently transferred to Asp-1144, from where it is relayed to 'His-64' of the phosphorelay intermediate protein YPD1. Under high osmolarity conditions, the histidine kinase is no longer active.</text>
</comment>
<comment type="catalytic activity">
    <reaction>
        <text>ATP + protein L-histidine = ADP + protein N-phospho-L-histidine.</text>
        <dbReference type="EC" id="2.7.13.3"/>
    </reaction>
</comment>
<comment type="subunit">
    <text evidence="7 8 10">Interacts with DJP1, MOG1 and YPD1.</text>
</comment>
<comment type="interaction">
    <interactant intactId="EBI-17357">
        <id>P39928</id>
    </interactant>
    <interactant intactId="EBI-34423">
        <id>Q07688</id>
        <label>YPD1</label>
    </interactant>
    <organismsDiffer>false</organismsDiffer>
    <experiments>2</experiments>
</comment>
<comment type="subcellular location">
    <subcellularLocation>
        <location evidence="12">Cell membrane</location>
        <topology evidence="12">Multi-pass membrane protein</topology>
    </subcellularLocation>
</comment>
<comment type="PTM">
    <text>The phosphorelay mechanism involves the sequential transfer of a phosphate group from His-576 (H1) in the histidine kinase domain (transmitter domain) to Asp-1144 (D1) of the response regulatory domain (receiver domain). This transfer probably occurs between two SLN1 molecules, rather than intramolecularly. The phosphate group is further transferred to 'His-64' (H2) of YPD1 and finally to 'Asp-554' (D2) of SSK1 or 'Asp-427' (D2) of SKN7.</text>
</comment>
<comment type="miscellaneous">
    <text evidence="6">Present with 656 molecules/cell in log phase SD medium.</text>
</comment>
<keyword id="KW-0002">3D-structure</keyword>
<keyword id="KW-0067">ATP-binding</keyword>
<keyword id="KW-1003">Cell membrane</keyword>
<keyword id="KW-0325">Glycoprotein</keyword>
<keyword id="KW-0418">Kinase</keyword>
<keyword id="KW-0460">Magnesium</keyword>
<keyword id="KW-0472">Membrane</keyword>
<keyword id="KW-0479">Metal-binding</keyword>
<keyword id="KW-0547">Nucleotide-binding</keyword>
<keyword id="KW-0597">Phosphoprotein</keyword>
<keyword id="KW-1185">Reference proteome</keyword>
<keyword id="KW-0808">Transferase</keyword>
<keyword id="KW-0812">Transmembrane</keyword>
<keyword id="KW-1133">Transmembrane helix</keyword>
<keyword id="KW-0902">Two-component regulatory system</keyword>
<proteinExistence type="evidence at protein level"/>
<accession>P39928</accession>
<accession>D6VVE0</accession>
<protein>
    <recommendedName>
        <fullName>Osmosensing histidine protein kinase SLN1</fullName>
        <ecNumber>2.7.13.3</ecNumber>
    </recommendedName>
    <alternativeName>
        <fullName>Osmolarity two-component system protein SLN1</fullName>
    </alternativeName>
    <alternativeName>
        <fullName>Tyrosine phosphatase-dependent protein 2</fullName>
    </alternativeName>
</protein>
<gene>
    <name type="primary">SLN1</name>
    <name type="synonym">YPD2</name>
    <name type="ordered locus">YIL147C</name>
</gene>
<feature type="chain" id="PRO_0000081405" description="Osmosensing histidine protein kinase SLN1">
    <location>
        <begin position="1"/>
        <end position="1220"/>
    </location>
</feature>
<feature type="topological domain" description="Cytoplasmic" evidence="2">
    <location>
        <begin position="1"/>
        <end position="22"/>
    </location>
</feature>
<feature type="transmembrane region" description="Helical" evidence="2">
    <location>
        <begin position="23"/>
        <end position="46"/>
    </location>
</feature>
<feature type="topological domain" description="Extracellular" evidence="2">
    <location>
        <begin position="47"/>
        <end position="333"/>
    </location>
</feature>
<feature type="transmembrane region" description="Helical" evidence="2">
    <location>
        <begin position="334"/>
        <end position="354"/>
    </location>
</feature>
<feature type="topological domain" description="Cytoplasmic" evidence="2">
    <location>
        <begin position="355"/>
        <end position="1220"/>
    </location>
</feature>
<feature type="domain" description="Histidine kinase" evidence="3">
    <location>
        <begin position="573"/>
        <end position="928"/>
    </location>
</feature>
<feature type="domain" description="Response regulatory" evidence="4">
    <location>
        <begin position="1089"/>
        <end position="1210"/>
    </location>
</feature>
<feature type="region of interest" description="Disordered" evidence="5">
    <location>
        <begin position="414"/>
        <end position="433"/>
    </location>
</feature>
<feature type="region of interest" description="Disordered" evidence="5">
    <location>
        <begin position="444"/>
        <end position="500"/>
    </location>
</feature>
<feature type="region of interest" description="Disordered" evidence="5">
    <location>
        <begin position="960"/>
        <end position="1016"/>
    </location>
</feature>
<feature type="region of interest" description="Disordered" evidence="5">
    <location>
        <begin position="1040"/>
        <end position="1081"/>
    </location>
</feature>
<feature type="compositionally biased region" description="Basic and acidic residues" evidence="5">
    <location>
        <begin position="451"/>
        <end position="468"/>
    </location>
</feature>
<feature type="compositionally biased region" description="Polar residues" evidence="5">
    <location>
        <begin position="965"/>
        <end position="984"/>
    </location>
</feature>
<feature type="compositionally biased region" description="Basic and acidic residues" evidence="5">
    <location>
        <begin position="988"/>
        <end position="1000"/>
    </location>
</feature>
<feature type="compositionally biased region" description="Polar residues" evidence="5">
    <location>
        <begin position="1063"/>
        <end position="1075"/>
    </location>
</feature>
<feature type="binding site" evidence="1">
    <location>
        <position position="1094"/>
    </location>
    <ligand>
        <name>Mg(2+)</name>
        <dbReference type="ChEBI" id="CHEBI:18420"/>
    </ligand>
</feature>
<feature type="binding site" evidence="1">
    <location>
        <position position="1095"/>
    </location>
    <ligand>
        <name>Mg(2+)</name>
        <dbReference type="ChEBI" id="CHEBI:18420"/>
    </ligand>
</feature>
<feature type="binding site" evidence="1">
    <location>
        <position position="1144"/>
    </location>
    <ligand>
        <name>Mg(2+)</name>
        <dbReference type="ChEBI" id="CHEBI:18420"/>
    </ligand>
</feature>
<feature type="binding site" evidence="1">
    <location>
        <position position="1195"/>
    </location>
    <ligand>
        <name>Mg(2+)</name>
        <dbReference type="ChEBI" id="CHEBI:18420"/>
    </ligand>
</feature>
<feature type="modified residue" description="Phosphoserine" evidence="15">
    <location>
        <position position="502"/>
    </location>
</feature>
<feature type="modified residue" description="Phosphohistidine; by autocatalysis" evidence="3 10">
    <location>
        <position position="576"/>
    </location>
</feature>
<feature type="modified residue" description="Phosphoserine" evidence="15">
    <location>
        <position position="758"/>
    </location>
</feature>
<feature type="modified residue" description="Phosphoserine" evidence="13 14 15">
    <location>
        <position position="833"/>
    </location>
</feature>
<feature type="modified residue" description="Phosphoserine" evidence="15">
    <location>
        <position position="1041"/>
    </location>
</feature>
<feature type="modified residue" description="Phosphoserine" evidence="15">
    <location>
        <position position="1044"/>
    </location>
</feature>
<feature type="modified residue" description="4-aspartylphosphate" evidence="4 10">
    <location>
        <position position="1144"/>
    </location>
</feature>
<feature type="glycosylation site" description="N-linked (GlcNAc...) asparagine" evidence="2">
    <location>
        <position position="100"/>
    </location>
</feature>
<feature type="glycosylation site" description="N-linked (GlcNAc...) asparagine" evidence="2">
    <location>
        <position position="138"/>
    </location>
</feature>
<feature type="glycosylation site" description="N-linked (GlcNAc...) asparagine" evidence="2">
    <location>
        <position position="142"/>
    </location>
</feature>
<feature type="glycosylation site" description="N-linked (GlcNAc...) asparagine" evidence="2">
    <location>
        <position position="181"/>
    </location>
</feature>
<feature type="glycosylation site" description="N-linked (GlcNAc...) asparagine" evidence="2">
    <location>
        <position position="224"/>
    </location>
</feature>
<feature type="glycosylation site" description="N-linked (GlcNAc...) asparagine" evidence="2">
    <location>
        <position position="272"/>
    </location>
</feature>
<feature type="mutagenesis site" description="Inactive." evidence="9">
    <original>H</original>
    <variation>Q</variation>
    <location>
        <position position="576"/>
    </location>
</feature>
<feature type="mutagenesis site" description="In SLN1-1; slow growth.">
    <original>G</original>
    <variation>D</variation>
    <location>
        <position position="891"/>
    </location>
</feature>
<feature type="mutagenesis site" description="Inactive." evidence="9">
    <original>D</original>
    <variation>N</variation>
    <location>
        <position position="1144"/>
    </location>
</feature>
<feature type="strand" evidence="16">
    <location>
        <begin position="1090"/>
        <end position="1093"/>
    </location>
</feature>
<feature type="helix" evidence="16">
    <location>
        <begin position="1097"/>
        <end position="1109"/>
    </location>
</feature>
<feature type="strand" evidence="16">
    <location>
        <begin position="1115"/>
        <end position="1120"/>
    </location>
</feature>
<feature type="helix" evidence="16">
    <location>
        <begin position="1121"/>
        <end position="1134"/>
    </location>
</feature>
<feature type="strand" evidence="16">
    <location>
        <begin position="1139"/>
        <end position="1143"/>
    </location>
</feature>
<feature type="strand" evidence="16">
    <location>
        <begin position="1148"/>
        <end position="1150"/>
    </location>
</feature>
<feature type="helix" evidence="16">
    <location>
        <begin position="1152"/>
        <end position="1162"/>
    </location>
</feature>
<feature type="strand" evidence="16">
    <location>
        <begin position="1169"/>
        <end position="1174"/>
    </location>
</feature>
<feature type="helix" evidence="16">
    <location>
        <begin position="1178"/>
        <end position="1186"/>
    </location>
</feature>
<feature type="strand" evidence="16">
    <location>
        <begin position="1190"/>
        <end position="1196"/>
    </location>
</feature>
<feature type="helix" evidence="16">
    <location>
        <begin position="1199"/>
        <end position="1209"/>
    </location>
</feature>
<dbReference type="EC" id="2.7.13.3"/>
<dbReference type="EMBL" id="U01835">
    <property type="protein sequence ID" value="AAC48912.1"/>
    <property type="molecule type" value="Unassigned_DNA"/>
</dbReference>
<dbReference type="EMBL" id="Z38059">
    <property type="protein sequence ID" value="CAA86131.1"/>
    <property type="molecule type" value="Genomic_DNA"/>
</dbReference>
<dbReference type="EMBL" id="BK006942">
    <property type="protein sequence ID" value="DAA08406.1"/>
    <property type="molecule type" value="Genomic_DNA"/>
</dbReference>
<dbReference type="PIR" id="S48387">
    <property type="entry name" value="S48387"/>
</dbReference>
<dbReference type="RefSeq" id="NP_012119.1">
    <property type="nucleotide sequence ID" value="NM_001179495.1"/>
</dbReference>
<dbReference type="PDB" id="1OXB">
    <property type="method" value="X-ray"/>
    <property type="resolution" value="2.30 A"/>
    <property type="chains" value="B=1087-1220"/>
</dbReference>
<dbReference type="PDB" id="1OXK">
    <property type="method" value="X-ray"/>
    <property type="resolution" value="2.10 A"/>
    <property type="chains" value="B/D/F/H/J/L=1087-1220"/>
</dbReference>
<dbReference type="PDB" id="2R25">
    <property type="method" value="X-ray"/>
    <property type="resolution" value="1.70 A"/>
    <property type="chains" value="B=1086-1218"/>
</dbReference>
<dbReference type="PDBsum" id="1OXB"/>
<dbReference type="PDBsum" id="1OXK"/>
<dbReference type="PDBsum" id="2R25"/>
<dbReference type="SMR" id="P39928"/>
<dbReference type="BioGRID" id="34845">
    <property type="interactions" value="174"/>
</dbReference>
<dbReference type="DIP" id="DIP-2939N"/>
<dbReference type="FunCoup" id="P39928">
    <property type="interactions" value="266"/>
</dbReference>
<dbReference type="IntAct" id="P39928">
    <property type="interactions" value="40"/>
</dbReference>
<dbReference type="MINT" id="P39928"/>
<dbReference type="STRING" id="4932.YIL147C"/>
<dbReference type="GlyCosmos" id="P39928">
    <property type="glycosylation" value="6 sites, No reported glycans"/>
</dbReference>
<dbReference type="GlyGen" id="P39928">
    <property type="glycosylation" value="7 sites"/>
</dbReference>
<dbReference type="iPTMnet" id="P39928"/>
<dbReference type="PaxDb" id="4932-YIL147C"/>
<dbReference type="PeptideAtlas" id="P39928"/>
<dbReference type="EnsemblFungi" id="YIL147C_mRNA">
    <property type="protein sequence ID" value="YIL147C"/>
    <property type="gene ID" value="YIL147C"/>
</dbReference>
<dbReference type="GeneID" id="854659"/>
<dbReference type="KEGG" id="sce:YIL147C"/>
<dbReference type="AGR" id="SGD:S000001409"/>
<dbReference type="SGD" id="S000001409">
    <property type="gene designation" value="SLN1"/>
</dbReference>
<dbReference type="VEuPathDB" id="FungiDB:YIL147C"/>
<dbReference type="eggNOG" id="KOG0519">
    <property type="taxonomic scope" value="Eukaryota"/>
</dbReference>
<dbReference type="HOGENOM" id="CLU_003731_0_0_1"/>
<dbReference type="InParanoid" id="P39928"/>
<dbReference type="OMA" id="WGDSNRI"/>
<dbReference type="OrthoDB" id="60033at2759"/>
<dbReference type="BioCyc" id="YEAST:G3O-31396-MONOMER"/>
<dbReference type="BRENDA" id="2.7.13.3">
    <property type="organism ID" value="984"/>
</dbReference>
<dbReference type="BioGRID-ORCS" id="854659">
    <property type="hits" value="6 hits in 13 CRISPR screens"/>
</dbReference>
<dbReference type="EvolutionaryTrace" id="P39928"/>
<dbReference type="PRO" id="PR:P39928"/>
<dbReference type="Proteomes" id="UP000002311">
    <property type="component" value="Chromosome IX"/>
</dbReference>
<dbReference type="RNAct" id="P39928">
    <property type="molecule type" value="protein"/>
</dbReference>
<dbReference type="GO" id="GO:0071944">
    <property type="term" value="C:cell periphery"/>
    <property type="evidence" value="ECO:0007005"/>
    <property type="project" value="SGD"/>
</dbReference>
<dbReference type="GO" id="GO:0005886">
    <property type="term" value="C:plasma membrane"/>
    <property type="evidence" value="ECO:0000314"/>
    <property type="project" value="SGD"/>
</dbReference>
<dbReference type="GO" id="GO:0005524">
    <property type="term" value="F:ATP binding"/>
    <property type="evidence" value="ECO:0007669"/>
    <property type="project" value="UniProtKB-KW"/>
</dbReference>
<dbReference type="GO" id="GO:0009927">
    <property type="term" value="F:histidine phosphotransfer kinase activity"/>
    <property type="evidence" value="ECO:0000314"/>
    <property type="project" value="SGD"/>
</dbReference>
<dbReference type="GO" id="GO:0046872">
    <property type="term" value="F:metal ion binding"/>
    <property type="evidence" value="ECO:0007669"/>
    <property type="project" value="UniProtKB-KW"/>
</dbReference>
<dbReference type="GO" id="GO:0005034">
    <property type="term" value="F:osmosensor activity"/>
    <property type="evidence" value="ECO:0000314"/>
    <property type="project" value="SGD"/>
</dbReference>
<dbReference type="GO" id="GO:0000155">
    <property type="term" value="F:phosphorelay sensor kinase activity"/>
    <property type="evidence" value="ECO:0000318"/>
    <property type="project" value="GO_Central"/>
</dbReference>
<dbReference type="GO" id="GO:0004673">
    <property type="term" value="F:protein histidine kinase activity"/>
    <property type="evidence" value="ECO:0000314"/>
    <property type="project" value="SGD"/>
</dbReference>
<dbReference type="GO" id="GO:0007234">
    <property type="term" value="P:osmosensory signaling via phosphorelay pathway"/>
    <property type="evidence" value="ECO:0000314"/>
    <property type="project" value="SGD"/>
</dbReference>
<dbReference type="GO" id="GO:0000160">
    <property type="term" value="P:phosphorelay signal transduction system"/>
    <property type="evidence" value="ECO:0000318"/>
    <property type="project" value="GO_Central"/>
</dbReference>
<dbReference type="CDD" id="cd06225">
    <property type="entry name" value="HAMP"/>
    <property type="match status" value="1"/>
</dbReference>
<dbReference type="CDD" id="cd00082">
    <property type="entry name" value="HisKA"/>
    <property type="match status" value="1"/>
</dbReference>
<dbReference type="CDD" id="cd17546">
    <property type="entry name" value="REC_hyHK_CKI1_RcsC-like"/>
    <property type="match status" value="1"/>
</dbReference>
<dbReference type="FunFam" id="1.10.287.130:FF:000004">
    <property type="entry name" value="Ethylene receptor 1"/>
    <property type="match status" value="1"/>
</dbReference>
<dbReference type="FunFam" id="3.40.50.2300:FF:000289">
    <property type="entry name" value="Osmosensing histidine protein kinase SLN1"/>
    <property type="match status" value="1"/>
</dbReference>
<dbReference type="Gene3D" id="1.10.287.130">
    <property type="match status" value="1"/>
</dbReference>
<dbReference type="Gene3D" id="3.40.50.2300">
    <property type="match status" value="1"/>
</dbReference>
<dbReference type="Gene3D" id="3.30.565.10">
    <property type="entry name" value="Histidine kinase-like ATPase, C-terminal domain"/>
    <property type="match status" value="1"/>
</dbReference>
<dbReference type="InterPro" id="IPR011006">
    <property type="entry name" value="CheY-like_superfamily"/>
</dbReference>
<dbReference type="InterPro" id="IPR003660">
    <property type="entry name" value="HAMP_dom"/>
</dbReference>
<dbReference type="InterPro" id="IPR036890">
    <property type="entry name" value="HATPase_C_sf"/>
</dbReference>
<dbReference type="InterPro" id="IPR005467">
    <property type="entry name" value="His_kinase_dom"/>
</dbReference>
<dbReference type="InterPro" id="IPR003661">
    <property type="entry name" value="HisK_dim/P_dom"/>
</dbReference>
<dbReference type="InterPro" id="IPR036097">
    <property type="entry name" value="HisK_dim/P_sf"/>
</dbReference>
<dbReference type="InterPro" id="IPR004358">
    <property type="entry name" value="Sig_transdc_His_kin-like_C"/>
</dbReference>
<dbReference type="InterPro" id="IPR001789">
    <property type="entry name" value="Sig_transdc_resp-reg_receiver"/>
</dbReference>
<dbReference type="PANTHER" id="PTHR43047:SF72">
    <property type="entry name" value="OSMOSENSING HISTIDINE PROTEIN KINASE SLN1"/>
    <property type="match status" value="1"/>
</dbReference>
<dbReference type="PANTHER" id="PTHR43047">
    <property type="entry name" value="TWO-COMPONENT HISTIDINE PROTEIN KINASE"/>
    <property type="match status" value="1"/>
</dbReference>
<dbReference type="Pfam" id="PF02518">
    <property type="entry name" value="HATPase_c"/>
    <property type="match status" value="1"/>
</dbReference>
<dbReference type="Pfam" id="PF00512">
    <property type="entry name" value="HisKA"/>
    <property type="match status" value="1"/>
</dbReference>
<dbReference type="Pfam" id="PF00072">
    <property type="entry name" value="Response_reg"/>
    <property type="match status" value="1"/>
</dbReference>
<dbReference type="PRINTS" id="PR00344">
    <property type="entry name" value="BCTRLSENSOR"/>
</dbReference>
<dbReference type="SMART" id="SM00387">
    <property type="entry name" value="HATPase_c"/>
    <property type="match status" value="1"/>
</dbReference>
<dbReference type="SMART" id="SM00388">
    <property type="entry name" value="HisKA"/>
    <property type="match status" value="1"/>
</dbReference>
<dbReference type="SMART" id="SM00448">
    <property type="entry name" value="REC"/>
    <property type="match status" value="1"/>
</dbReference>
<dbReference type="SUPFAM" id="SSF55874">
    <property type="entry name" value="ATPase domain of HSP90 chaperone/DNA topoisomerase II/histidine kinase"/>
    <property type="match status" value="2"/>
</dbReference>
<dbReference type="SUPFAM" id="SSF52172">
    <property type="entry name" value="CheY-like"/>
    <property type="match status" value="1"/>
</dbReference>
<dbReference type="SUPFAM" id="SSF47384">
    <property type="entry name" value="Homodimeric domain of signal transducing histidine kinase"/>
    <property type="match status" value="1"/>
</dbReference>
<dbReference type="PROSITE" id="PS50109">
    <property type="entry name" value="HIS_KIN"/>
    <property type="match status" value="1"/>
</dbReference>
<dbReference type="PROSITE" id="PS50110">
    <property type="entry name" value="RESPONSE_REGULATORY"/>
    <property type="match status" value="1"/>
</dbReference>
<sequence>MRFGLPSKLELTPPFRIGIRTQLTALVSIVALGSLIILAVTTGVYFTSNYKNLRSDRLYIAAQLKSSQIDQTLNYLYYQAYYLASRDALQSSLTSYVAGNKSADNWVDSLSVIQKFLSSSNLFYVAKVYDSSFNAVLNATNNGTGDLIPEDVLDSLFPLSTDTPLPSSLETIGILTDPVLNSTDYLMSMSLPIFANPSIILTDSRVYGYITIIMSAEGLKSVFNDTTALEHSTIAIISAVYNSQGKASGYHFVFPPYGSRSDLPQKVFSIKNDTFISSAFRNGKGGSLKQTNILSTRNTALGYSPCSFNLVNWVAIVSQPESVFLSPATKLAKIITGTVIAIGVFVILLTLPLAHWAVQPIVRLQKATELITEGRGLRPSTPRTISRASSFKRGFSSGFAVPSSLLQFNTAEAGSTTSVSGHGGSGHGSGAAFSANSSMKSAINLGNEKMSPPEEENKIPNNHTDAKISMDGSLNHDLLGPHSLRHNDTDRSSNRSHILTTSANLTEARLPDYRRLFSDELSDLTETFNTMTDALDQHYALLEERVRARTKQLEAAKIEAEAANEAKTVFIANISHELRTPLNGILGMTAISMEETDVNKIRNSLKLIFRSGELLLHILTELLTFSKNVLQRTKLEKRDFCITDVALQIKSIFGKVAKDQRVRLSISLFPNLIRTMVLWGDSNRIIQIVMNLVSNALKFTPVDGTVDVRMKLLGEYDKELSEKKQYKEVYIKKGTEVTENLETTDKYDLPTLSNHRKSVDLESSATSLGSNRDTSTIQEEITKRNTVANESIYKKVNDREKASNDDVSSIVSTTTSSYDNAIFNSQFNKAPGSDDEEGGNLGRPIENPKTWVISIEVEDTGPGIDPSLQESVFHPFVQGDQTLSRQYGGTGLGLSICRQLANMMHGTMKLESKVGVGSKFTFTLPLNQTKEISFADMEFPFEDEFNPESRKNRRVKFSVAKSIKSRQSTSSVATPATNRSSLTNDVLPEVRSKGKHETKDVGNPNMGREEKNDNGGLEQLQEKNIKPSICLTGAEVNEQNSLSSKHRSRHEGLGSVNLDRPFLQSTGTATSSRNIPTVKDDDKNETSVKILVVEDNHVNQEVIKRMLNLEGIENIELACDGQEAFDKVKELTSKGENYNMIFMDVQMPKVDGLLSTKMIRRDLGYTSPIVALTAFADDSNIKECLESGMNGFLSKPIKRPKLKTILTEFCAAYQGKKNNK</sequence>
<reference key="1">
    <citation type="journal article" date="1993" name="Science">
        <title>A yeast protein similar to bacterial two-component regulators.</title>
        <authorList>
            <person name="Ota I.M."/>
            <person name="Varshavsky A."/>
        </authorList>
    </citation>
    <scope>NUCLEOTIDE SEQUENCE</scope>
    <source>
        <strain>S288c / YPH1</strain>
    </source>
</reference>
<reference key="2">
    <citation type="journal article" date="1997" name="Nature">
        <title>The nucleotide sequence of Saccharomyces cerevisiae chromosome IX.</title>
        <authorList>
            <person name="Churcher C.M."/>
            <person name="Bowman S."/>
            <person name="Badcock K."/>
            <person name="Bankier A.T."/>
            <person name="Brown D."/>
            <person name="Chillingworth T."/>
            <person name="Connor R."/>
            <person name="Devlin K."/>
            <person name="Gentles S."/>
            <person name="Hamlin N."/>
            <person name="Harris D.E."/>
            <person name="Horsnell T."/>
            <person name="Hunt S."/>
            <person name="Jagels K."/>
            <person name="Jones M."/>
            <person name="Lye G."/>
            <person name="Moule S."/>
            <person name="Odell C."/>
            <person name="Pearson D."/>
            <person name="Rajandream M.A."/>
            <person name="Rice P."/>
            <person name="Rowley N."/>
            <person name="Skelton J."/>
            <person name="Smith V."/>
            <person name="Walsh S.V."/>
            <person name="Whitehead S."/>
            <person name="Barrell B.G."/>
        </authorList>
    </citation>
    <scope>NUCLEOTIDE SEQUENCE [LARGE SCALE GENOMIC DNA]</scope>
    <source>
        <strain>ATCC 204508 / S288c</strain>
    </source>
</reference>
<reference key="3">
    <citation type="journal article" date="2014" name="G3 (Bethesda)">
        <title>The reference genome sequence of Saccharomyces cerevisiae: Then and now.</title>
        <authorList>
            <person name="Engel S.R."/>
            <person name="Dietrich F.S."/>
            <person name="Fisk D.G."/>
            <person name="Binkley G."/>
            <person name="Balakrishnan R."/>
            <person name="Costanzo M.C."/>
            <person name="Dwight S.S."/>
            <person name="Hitz B.C."/>
            <person name="Karra K."/>
            <person name="Nash R.S."/>
            <person name="Weng S."/>
            <person name="Wong E.D."/>
            <person name="Lloyd P."/>
            <person name="Skrzypek M.S."/>
            <person name="Miyasato S.R."/>
            <person name="Simison M."/>
            <person name="Cherry J.M."/>
        </authorList>
    </citation>
    <scope>GENOME REANNOTATION</scope>
    <source>
        <strain>ATCC 204508 / S288c</strain>
    </source>
</reference>
<reference key="4">
    <citation type="journal article" date="1994" name="Nature">
        <title>A two-component system that regulates an osmosensing MAP kinase cascade in yeast.</title>
        <authorList>
            <person name="Maeda T."/>
            <person name="Wurgler-Murphy S.M."/>
            <person name="Saito H."/>
        </authorList>
    </citation>
    <scope>MUTAGENESIS OF HIS-576 AND ASP-1144</scope>
</reference>
<reference key="5">
    <citation type="journal article" date="1996" name="Cell">
        <title>Yeast HOG1 MAP kinase cascade is regulated by a multistep phosphorelay mechanism in the SLN1-YPD1-SSK1 two-component osmosensor.</title>
        <authorList>
            <person name="Posas F."/>
            <person name="Wurgler-Murphy S.M."/>
            <person name="Maeda T."/>
            <person name="Witten E.A."/>
            <person name="Thai T.C."/>
            <person name="Saito H."/>
        </authorList>
    </citation>
    <scope>FUNCTION</scope>
    <scope>PHOSPHORYLATION AT HIS-576 AND ASP-1144</scope>
    <scope>INTERACTION WITH YPD1</scope>
</reference>
<reference key="6">
    <citation type="journal article" date="1998" name="EMBO J.">
        <title>The yeast histidine protein kinase, Sln1p, mediates phosphotransfer to two response regulators, Ssk1p and Skn7p.</title>
        <authorList>
            <person name="Li S."/>
            <person name="Ault A."/>
            <person name="Malone C.L."/>
            <person name="Raitt D."/>
            <person name="Dean S."/>
            <person name="Johnston L.H."/>
            <person name="Deschenes R.J."/>
            <person name="Fassler J.S."/>
        </authorList>
    </citation>
    <scope>FUNCTION</scope>
</reference>
<reference key="7">
    <citation type="journal article" date="2003" name="Eukaryot. Cell">
        <title>Saccharomyces cerevisiae histidine phosphotransferase Ypd1p shuttles between the nucleus and cytoplasm for SLN1-dependent phosphorylation of Ssk1p and Skn7p.</title>
        <authorList>
            <person name="Lu J.M.-Y."/>
            <person name="Deschenes R.J."/>
            <person name="Fassler J.S."/>
        </authorList>
    </citation>
    <scope>SUBCELLULAR LOCATION</scope>
</reference>
<reference key="8">
    <citation type="journal article" date="2003" name="Nature">
        <title>Global analysis of protein expression in yeast.</title>
        <authorList>
            <person name="Ghaemmaghami S."/>
            <person name="Huh W.-K."/>
            <person name="Bower K."/>
            <person name="Howson R.W."/>
            <person name="Belle A."/>
            <person name="Dephoure N."/>
            <person name="O'Shea E.K."/>
            <person name="Weissman J.S."/>
        </authorList>
    </citation>
    <scope>LEVEL OF PROTEIN EXPRESSION [LARGE SCALE ANALYSIS]</scope>
</reference>
<reference key="9">
    <citation type="journal article" date="2004" name="Eukaryot. Cell">
        <title>Role for the Ran binding protein, Mog1p, in Saccharomyces cerevisiae SLN1-SKN7 signal transduction.</title>
        <authorList>
            <person name="Lu J.M.-Y."/>
            <person name="Deschenes R.J."/>
            <person name="Fassler J.S."/>
        </authorList>
    </citation>
    <scope>INTERACTION WITH DJP1 AND MOG1</scope>
</reference>
<reference key="10">
    <citation type="journal article" date="2007" name="J. Proteome Res.">
        <title>Large-scale phosphorylation analysis of alpha-factor-arrested Saccharomyces cerevisiae.</title>
        <authorList>
            <person name="Li X."/>
            <person name="Gerber S.A."/>
            <person name="Rudner A.D."/>
            <person name="Beausoleil S.A."/>
            <person name="Haas W."/>
            <person name="Villen J."/>
            <person name="Elias J.E."/>
            <person name="Gygi S.P."/>
        </authorList>
    </citation>
    <scope>PHOSPHORYLATION [LARGE SCALE ANALYSIS] AT SER-833</scope>
    <scope>IDENTIFICATION BY MASS SPECTROMETRY [LARGE SCALE ANALYSIS]</scope>
    <source>
        <strain>ADR376</strain>
    </source>
</reference>
<reference key="11">
    <citation type="journal article" date="2008" name="Mol. Cell. Proteomics">
        <title>A multidimensional chromatography technology for in-depth phosphoproteome analysis.</title>
        <authorList>
            <person name="Albuquerque C.P."/>
            <person name="Smolka M.B."/>
            <person name="Payne S.H."/>
            <person name="Bafna V."/>
            <person name="Eng J."/>
            <person name="Zhou H."/>
        </authorList>
    </citation>
    <scope>PHOSPHORYLATION [LARGE SCALE ANALYSIS] AT SER-833</scope>
    <scope>IDENTIFICATION BY MASS SPECTROMETRY [LARGE SCALE ANALYSIS]</scope>
</reference>
<reference key="12">
    <citation type="journal article" date="2009" name="Science">
        <title>Global analysis of Cdk1 substrate phosphorylation sites provides insights into evolution.</title>
        <authorList>
            <person name="Holt L.J."/>
            <person name="Tuch B.B."/>
            <person name="Villen J."/>
            <person name="Johnson A.D."/>
            <person name="Gygi S.P."/>
            <person name="Morgan D.O."/>
        </authorList>
    </citation>
    <scope>PHOSPHORYLATION [LARGE SCALE ANALYSIS] AT SER-502; SER-758; SER-833; SER-1041 AND SER-1044</scope>
    <scope>IDENTIFICATION BY MASS SPECTROMETRY [LARGE SCALE ANALYSIS]</scope>
</reference>
<reference key="13">
    <citation type="journal article" date="2003" name="Structure">
        <title>The yeast YPD1/SLN1 complex: insights into molecular recognition in two-component signaling systems.</title>
        <authorList>
            <person name="Xu Q."/>
            <person name="Porter S.W."/>
            <person name="West A.H."/>
        </authorList>
    </citation>
    <scope>X-RAY CRYSTALLOGRAPHY (2.1 ANGSTROMS) OF 1087-1220 IN COMPLEX WITH YPD1</scope>
</reference>
<name>SLN1_YEAST</name>